<proteinExistence type="inferred from homology"/>
<protein>
    <recommendedName>
        <fullName evidence="1">CTP synthase</fullName>
        <ecNumber evidence="1">6.3.4.2</ecNumber>
    </recommendedName>
    <alternativeName>
        <fullName evidence="1">Cytidine 5'-triphosphate synthase</fullName>
    </alternativeName>
    <alternativeName>
        <fullName evidence="1">Cytidine triphosphate synthetase</fullName>
        <shortName evidence="1">CTP synthetase</shortName>
        <shortName evidence="1">CTPS</shortName>
    </alternativeName>
    <alternativeName>
        <fullName evidence="1">UTP--ammonia ligase</fullName>
    </alternativeName>
</protein>
<evidence type="ECO:0000255" key="1">
    <source>
        <dbReference type="HAMAP-Rule" id="MF_01227"/>
    </source>
</evidence>
<name>PYRG_RUEPO</name>
<comment type="function">
    <text evidence="1">Catalyzes the ATP-dependent amination of UTP to CTP with either L-glutamine or ammonia as the source of nitrogen. Regulates intracellular CTP levels through interactions with the four ribonucleotide triphosphates.</text>
</comment>
<comment type="catalytic activity">
    <reaction evidence="1">
        <text>UTP + L-glutamine + ATP + H2O = CTP + L-glutamate + ADP + phosphate + 2 H(+)</text>
        <dbReference type="Rhea" id="RHEA:26426"/>
        <dbReference type="ChEBI" id="CHEBI:15377"/>
        <dbReference type="ChEBI" id="CHEBI:15378"/>
        <dbReference type="ChEBI" id="CHEBI:29985"/>
        <dbReference type="ChEBI" id="CHEBI:30616"/>
        <dbReference type="ChEBI" id="CHEBI:37563"/>
        <dbReference type="ChEBI" id="CHEBI:43474"/>
        <dbReference type="ChEBI" id="CHEBI:46398"/>
        <dbReference type="ChEBI" id="CHEBI:58359"/>
        <dbReference type="ChEBI" id="CHEBI:456216"/>
        <dbReference type="EC" id="6.3.4.2"/>
    </reaction>
</comment>
<comment type="catalytic activity">
    <reaction evidence="1">
        <text>L-glutamine + H2O = L-glutamate + NH4(+)</text>
        <dbReference type="Rhea" id="RHEA:15889"/>
        <dbReference type="ChEBI" id="CHEBI:15377"/>
        <dbReference type="ChEBI" id="CHEBI:28938"/>
        <dbReference type="ChEBI" id="CHEBI:29985"/>
        <dbReference type="ChEBI" id="CHEBI:58359"/>
    </reaction>
</comment>
<comment type="catalytic activity">
    <reaction evidence="1">
        <text>UTP + NH4(+) + ATP = CTP + ADP + phosphate + 2 H(+)</text>
        <dbReference type="Rhea" id="RHEA:16597"/>
        <dbReference type="ChEBI" id="CHEBI:15378"/>
        <dbReference type="ChEBI" id="CHEBI:28938"/>
        <dbReference type="ChEBI" id="CHEBI:30616"/>
        <dbReference type="ChEBI" id="CHEBI:37563"/>
        <dbReference type="ChEBI" id="CHEBI:43474"/>
        <dbReference type="ChEBI" id="CHEBI:46398"/>
        <dbReference type="ChEBI" id="CHEBI:456216"/>
    </reaction>
</comment>
<comment type="activity regulation">
    <text evidence="1">Allosterically activated by GTP, when glutamine is the substrate; GTP has no effect on the reaction when ammonia is the substrate. The allosteric effector GTP functions by stabilizing the protein conformation that binds the tetrahedral intermediate(s) formed during glutamine hydrolysis. Inhibited by the product CTP, via allosteric rather than competitive inhibition.</text>
</comment>
<comment type="pathway">
    <text evidence="1">Pyrimidine metabolism; CTP biosynthesis via de novo pathway; CTP from UDP: step 2/2.</text>
</comment>
<comment type="subunit">
    <text evidence="1">Homotetramer.</text>
</comment>
<comment type="miscellaneous">
    <text evidence="1">CTPSs have evolved a hybrid strategy for distinguishing between UTP and CTP. The overlapping regions of the product feedback inhibitory and substrate sites recognize a common feature in both compounds, the triphosphate moiety. To differentiate isosteric substrate and product pyrimidine rings, an additional pocket far from the expected kinase/ligase catalytic site, specifically recognizes the cytosine and ribose portions of the product inhibitor.</text>
</comment>
<comment type="similarity">
    <text evidence="1">Belongs to the CTP synthase family.</text>
</comment>
<organism>
    <name type="scientific">Ruegeria pomeroyi (strain ATCC 700808 / DSM 15171 / DSS-3)</name>
    <name type="common">Silicibacter pomeroyi</name>
    <dbReference type="NCBI Taxonomy" id="246200"/>
    <lineage>
        <taxon>Bacteria</taxon>
        <taxon>Pseudomonadati</taxon>
        <taxon>Pseudomonadota</taxon>
        <taxon>Alphaproteobacteria</taxon>
        <taxon>Rhodobacterales</taxon>
        <taxon>Roseobacteraceae</taxon>
        <taxon>Ruegeria</taxon>
    </lineage>
</organism>
<dbReference type="EC" id="6.3.4.2" evidence="1"/>
<dbReference type="EMBL" id="CP000031">
    <property type="protein sequence ID" value="AAV94601.1"/>
    <property type="molecule type" value="Genomic_DNA"/>
</dbReference>
<dbReference type="RefSeq" id="WP_011047051.1">
    <property type="nucleotide sequence ID" value="NC_003911.12"/>
</dbReference>
<dbReference type="SMR" id="Q5LTV0"/>
<dbReference type="STRING" id="246200.SPO1312"/>
<dbReference type="MEROPS" id="C26.964"/>
<dbReference type="PaxDb" id="246200-SPO1312"/>
<dbReference type="KEGG" id="sil:SPO1312"/>
<dbReference type="eggNOG" id="COG0504">
    <property type="taxonomic scope" value="Bacteria"/>
</dbReference>
<dbReference type="HOGENOM" id="CLU_011675_5_0_5"/>
<dbReference type="OrthoDB" id="9801107at2"/>
<dbReference type="UniPathway" id="UPA00159">
    <property type="reaction ID" value="UER00277"/>
</dbReference>
<dbReference type="Proteomes" id="UP000001023">
    <property type="component" value="Chromosome"/>
</dbReference>
<dbReference type="GO" id="GO:0005829">
    <property type="term" value="C:cytosol"/>
    <property type="evidence" value="ECO:0007669"/>
    <property type="project" value="TreeGrafter"/>
</dbReference>
<dbReference type="GO" id="GO:0005524">
    <property type="term" value="F:ATP binding"/>
    <property type="evidence" value="ECO:0007669"/>
    <property type="project" value="UniProtKB-KW"/>
</dbReference>
<dbReference type="GO" id="GO:0003883">
    <property type="term" value="F:CTP synthase activity"/>
    <property type="evidence" value="ECO:0007669"/>
    <property type="project" value="UniProtKB-UniRule"/>
</dbReference>
<dbReference type="GO" id="GO:0004359">
    <property type="term" value="F:glutaminase activity"/>
    <property type="evidence" value="ECO:0007669"/>
    <property type="project" value="RHEA"/>
</dbReference>
<dbReference type="GO" id="GO:0042802">
    <property type="term" value="F:identical protein binding"/>
    <property type="evidence" value="ECO:0007669"/>
    <property type="project" value="TreeGrafter"/>
</dbReference>
<dbReference type="GO" id="GO:0046872">
    <property type="term" value="F:metal ion binding"/>
    <property type="evidence" value="ECO:0007669"/>
    <property type="project" value="UniProtKB-KW"/>
</dbReference>
<dbReference type="GO" id="GO:0044210">
    <property type="term" value="P:'de novo' CTP biosynthetic process"/>
    <property type="evidence" value="ECO:0007669"/>
    <property type="project" value="UniProtKB-UniRule"/>
</dbReference>
<dbReference type="GO" id="GO:0019856">
    <property type="term" value="P:pyrimidine nucleobase biosynthetic process"/>
    <property type="evidence" value="ECO:0007669"/>
    <property type="project" value="TreeGrafter"/>
</dbReference>
<dbReference type="CDD" id="cd03113">
    <property type="entry name" value="CTPS_N"/>
    <property type="match status" value="1"/>
</dbReference>
<dbReference type="CDD" id="cd01746">
    <property type="entry name" value="GATase1_CTP_Synthase"/>
    <property type="match status" value="1"/>
</dbReference>
<dbReference type="FunFam" id="3.40.50.300:FF:000009">
    <property type="entry name" value="CTP synthase"/>
    <property type="match status" value="1"/>
</dbReference>
<dbReference type="FunFam" id="3.40.50.880:FF:000002">
    <property type="entry name" value="CTP synthase"/>
    <property type="match status" value="1"/>
</dbReference>
<dbReference type="Gene3D" id="3.40.50.880">
    <property type="match status" value="1"/>
</dbReference>
<dbReference type="Gene3D" id="3.40.50.300">
    <property type="entry name" value="P-loop containing nucleotide triphosphate hydrolases"/>
    <property type="match status" value="1"/>
</dbReference>
<dbReference type="HAMAP" id="MF_01227">
    <property type="entry name" value="PyrG"/>
    <property type="match status" value="1"/>
</dbReference>
<dbReference type="InterPro" id="IPR029062">
    <property type="entry name" value="Class_I_gatase-like"/>
</dbReference>
<dbReference type="InterPro" id="IPR004468">
    <property type="entry name" value="CTP_synthase"/>
</dbReference>
<dbReference type="InterPro" id="IPR017456">
    <property type="entry name" value="CTP_synthase_N"/>
</dbReference>
<dbReference type="InterPro" id="IPR017926">
    <property type="entry name" value="GATASE"/>
</dbReference>
<dbReference type="InterPro" id="IPR033828">
    <property type="entry name" value="GATase1_CTP_Synthase"/>
</dbReference>
<dbReference type="InterPro" id="IPR027417">
    <property type="entry name" value="P-loop_NTPase"/>
</dbReference>
<dbReference type="NCBIfam" id="NF003792">
    <property type="entry name" value="PRK05380.1"/>
    <property type="match status" value="1"/>
</dbReference>
<dbReference type="NCBIfam" id="TIGR00337">
    <property type="entry name" value="PyrG"/>
    <property type="match status" value="1"/>
</dbReference>
<dbReference type="PANTHER" id="PTHR11550">
    <property type="entry name" value="CTP SYNTHASE"/>
    <property type="match status" value="1"/>
</dbReference>
<dbReference type="PANTHER" id="PTHR11550:SF0">
    <property type="entry name" value="CTP SYNTHASE-RELATED"/>
    <property type="match status" value="1"/>
</dbReference>
<dbReference type="Pfam" id="PF06418">
    <property type="entry name" value="CTP_synth_N"/>
    <property type="match status" value="1"/>
</dbReference>
<dbReference type="Pfam" id="PF00117">
    <property type="entry name" value="GATase"/>
    <property type="match status" value="1"/>
</dbReference>
<dbReference type="SUPFAM" id="SSF52317">
    <property type="entry name" value="Class I glutamine amidotransferase-like"/>
    <property type="match status" value="1"/>
</dbReference>
<dbReference type="SUPFAM" id="SSF52540">
    <property type="entry name" value="P-loop containing nucleoside triphosphate hydrolases"/>
    <property type="match status" value="1"/>
</dbReference>
<dbReference type="PROSITE" id="PS51273">
    <property type="entry name" value="GATASE_TYPE_1"/>
    <property type="match status" value="1"/>
</dbReference>
<feature type="chain" id="PRO_0000266220" description="CTP synthase">
    <location>
        <begin position="1"/>
        <end position="547"/>
    </location>
</feature>
<feature type="domain" description="Glutamine amidotransferase type-1" evidence="1">
    <location>
        <begin position="291"/>
        <end position="546"/>
    </location>
</feature>
<feature type="region of interest" description="Amidoligase domain" evidence="1">
    <location>
        <begin position="1"/>
        <end position="265"/>
    </location>
</feature>
<feature type="active site" description="Nucleophile; for glutamine hydrolysis" evidence="1">
    <location>
        <position position="380"/>
    </location>
</feature>
<feature type="active site" evidence="1">
    <location>
        <position position="519"/>
    </location>
</feature>
<feature type="active site" evidence="1">
    <location>
        <position position="521"/>
    </location>
</feature>
<feature type="binding site" evidence="1">
    <location>
        <position position="13"/>
    </location>
    <ligand>
        <name>CTP</name>
        <dbReference type="ChEBI" id="CHEBI:37563"/>
        <note>allosteric inhibitor</note>
    </ligand>
</feature>
<feature type="binding site" evidence="1">
    <location>
        <position position="13"/>
    </location>
    <ligand>
        <name>UTP</name>
        <dbReference type="ChEBI" id="CHEBI:46398"/>
    </ligand>
</feature>
<feature type="binding site" evidence="1">
    <location>
        <begin position="14"/>
        <end position="19"/>
    </location>
    <ligand>
        <name>ATP</name>
        <dbReference type="ChEBI" id="CHEBI:30616"/>
    </ligand>
</feature>
<feature type="binding site" evidence="1">
    <location>
        <position position="71"/>
    </location>
    <ligand>
        <name>ATP</name>
        <dbReference type="ChEBI" id="CHEBI:30616"/>
    </ligand>
</feature>
<feature type="binding site" evidence="1">
    <location>
        <position position="71"/>
    </location>
    <ligand>
        <name>Mg(2+)</name>
        <dbReference type="ChEBI" id="CHEBI:18420"/>
    </ligand>
</feature>
<feature type="binding site" evidence="1">
    <location>
        <position position="139"/>
    </location>
    <ligand>
        <name>Mg(2+)</name>
        <dbReference type="ChEBI" id="CHEBI:18420"/>
    </ligand>
</feature>
<feature type="binding site" evidence="1">
    <location>
        <begin position="146"/>
        <end position="148"/>
    </location>
    <ligand>
        <name>CTP</name>
        <dbReference type="ChEBI" id="CHEBI:37563"/>
        <note>allosteric inhibitor</note>
    </ligand>
</feature>
<feature type="binding site" evidence="1">
    <location>
        <begin position="186"/>
        <end position="191"/>
    </location>
    <ligand>
        <name>CTP</name>
        <dbReference type="ChEBI" id="CHEBI:37563"/>
        <note>allosteric inhibitor</note>
    </ligand>
</feature>
<feature type="binding site" evidence="1">
    <location>
        <begin position="186"/>
        <end position="191"/>
    </location>
    <ligand>
        <name>UTP</name>
        <dbReference type="ChEBI" id="CHEBI:46398"/>
    </ligand>
</feature>
<feature type="binding site" evidence="1">
    <location>
        <position position="222"/>
    </location>
    <ligand>
        <name>CTP</name>
        <dbReference type="ChEBI" id="CHEBI:37563"/>
        <note>allosteric inhibitor</note>
    </ligand>
</feature>
<feature type="binding site" evidence="1">
    <location>
        <position position="222"/>
    </location>
    <ligand>
        <name>UTP</name>
        <dbReference type="ChEBI" id="CHEBI:46398"/>
    </ligand>
</feature>
<feature type="binding site" evidence="1">
    <location>
        <position position="353"/>
    </location>
    <ligand>
        <name>L-glutamine</name>
        <dbReference type="ChEBI" id="CHEBI:58359"/>
    </ligand>
</feature>
<feature type="binding site" evidence="1">
    <location>
        <begin position="381"/>
        <end position="384"/>
    </location>
    <ligand>
        <name>L-glutamine</name>
        <dbReference type="ChEBI" id="CHEBI:58359"/>
    </ligand>
</feature>
<feature type="binding site" evidence="1">
    <location>
        <position position="404"/>
    </location>
    <ligand>
        <name>L-glutamine</name>
        <dbReference type="ChEBI" id="CHEBI:58359"/>
    </ligand>
</feature>
<feature type="binding site" evidence="1">
    <location>
        <position position="474"/>
    </location>
    <ligand>
        <name>L-glutamine</name>
        <dbReference type="ChEBI" id="CHEBI:58359"/>
    </ligand>
</feature>
<gene>
    <name evidence="1" type="primary">pyrG</name>
    <name type="ordered locus">SPO1312</name>
</gene>
<reference key="1">
    <citation type="journal article" date="2004" name="Nature">
        <title>Genome sequence of Silicibacter pomeroyi reveals adaptations to the marine environment.</title>
        <authorList>
            <person name="Moran M.A."/>
            <person name="Buchan A."/>
            <person name="Gonzalez J.M."/>
            <person name="Heidelberg J.F."/>
            <person name="Whitman W.B."/>
            <person name="Kiene R.P."/>
            <person name="Henriksen J.R."/>
            <person name="King G.M."/>
            <person name="Belas R."/>
            <person name="Fuqua C."/>
            <person name="Brinkac L.M."/>
            <person name="Lewis M."/>
            <person name="Johri S."/>
            <person name="Weaver B."/>
            <person name="Pai G."/>
            <person name="Eisen J.A."/>
            <person name="Rahe E."/>
            <person name="Sheldon W.M."/>
            <person name="Ye W."/>
            <person name="Miller T.R."/>
            <person name="Carlton J."/>
            <person name="Rasko D.A."/>
            <person name="Paulsen I.T."/>
            <person name="Ren Q."/>
            <person name="Daugherty S.C."/>
            <person name="DeBoy R.T."/>
            <person name="Dodson R.J."/>
            <person name="Durkin A.S."/>
            <person name="Madupu R."/>
            <person name="Nelson W.C."/>
            <person name="Sullivan S.A."/>
            <person name="Rosovitz M.J."/>
            <person name="Haft D.H."/>
            <person name="Selengut J."/>
            <person name="Ward N."/>
        </authorList>
    </citation>
    <scope>NUCLEOTIDE SEQUENCE [LARGE SCALE GENOMIC DNA]</scope>
    <source>
        <strain>ATCC 700808 / DSM 15171 / DSS-3</strain>
    </source>
</reference>
<reference key="2">
    <citation type="journal article" date="2014" name="Stand. Genomic Sci.">
        <title>An updated genome annotation for the model marine bacterium Ruegeria pomeroyi DSS-3.</title>
        <authorList>
            <person name="Rivers A.R."/>
            <person name="Smith C.B."/>
            <person name="Moran M.A."/>
        </authorList>
    </citation>
    <scope>GENOME REANNOTATION</scope>
    <source>
        <strain>ATCC 700808 / DSM 15171 / DSS-3</strain>
    </source>
</reference>
<accession>Q5LTV0</accession>
<keyword id="KW-0067">ATP-binding</keyword>
<keyword id="KW-0315">Glutamine amidotransferase</keyword>
<keyword id="KW-0436">Ligase</keyword>
<keyword id="KW-0460">Magnesium</keyword>
<keyword id="KW-0479">Metal-binding</keyword>
<keyword id="KW-0547">Nucleotide-binding</keyword>
<keyword id="KW-0665">Pyrimidine biosynthesis</keyword>
<keyword id="KW-1185">Reference proteome</keyword>
<sequence>MARFIFITGGVVSSLGKGLASAALGALLQARGFSVRLRKLDPYLNVDPGTMSPFEHGEVFVTDDGAETDLDLGHYERFTGVAARKTDSVSSGRIYSNVLEKERRGDYLGKTIQVIPHVTNEIKDFISIGEDEVDFMLCEIGGTVGDIEGLPFFEAIRQFSQDKPRGQCIFMHLTLLPYIKASGELKTKPTQHSVKELRSIGLAPDILVCRSEGPIPQKEREKLALFCNVRPDSVIAAQDLSTIYDAPLAYHREGLDQAVLDAFQISPAPKPDLTKWEDVSDRVHNPEGEVKIAIVGKYVQLEDAYKSIAEALTHGGMANRVKVRIEWVDAEIFEKEDPAPHLEGFHAILVPGGFGERGTEGKIKAAQYAREHQVPYLGICLGMQMAVIEAARNVAGIAGAGSEEFDHEAGKKRFEPVVYHLKEWVQGNYKVSRKVDDDKGGTMRLGAYDAVLKEGSRVAEVYGGTAIEERHRHRYEVDIKYREQLEKAGLCFSGMSPDGRLPEIVEWTDHPWFIGVQYHPELKSKPFDPHPLFADFVRAAKESSRLV</sequence>